<gene>
    <name evidence="1" type="primary">hslO</name>
    <name type="ordered locus">PLES_55871</name>
</gene>
<proteinExistence type="inferred from homology"/>
<reference key="1">
    <citation type="journal article" date="2009" name="Genome Res.">
        <title>Newly introduced genomic prophage islands are critical determinants of in vivo competitiveness in the Liverpool epidemic strain of Pseudomonas aeruginosa.</title>
        <authorList>
            <person name="Winstanley C."/>
            <person name="Langille M.G.I."/>
            <person name="Fothergill J.L."/>
            <person name="Kukavica-Ibrulj I."/>
            <person name="Paradis-Bleau C."/>
            <person name="Sanschagrin F."/>
            <person name="Thomson N.R."/>
            <person name="Winsor G.L."/>
            <person name="Quail M.A."/>
            <person name="Lennard N."/>
            <person name="Bignell A."/>
            <person name="Clarke L."/>
            <person name="Seeger K."/>
            <person name="Saunders D."/>
            <person name="Harris D."/>
            <person name="Parkhill J."/>
            <person name="Hancock R.E.W."/>
            <person name="Brinkman F.S.L."/>
            <person name="Levesque R.C."/>
        </authorList>
    </citation>
    <scope>NUCLEOTIDE SEQUENCE [LARGE SCALE GENOMIC DNA]</scope>
    <source>
        <strain>LESB58</strain>
    </source>
</reference>
<sequence>MSHSDQSQRFLFDDTDVRGEMVDLERSYSEVLAKHPYPEPVAQLLGEMLAAASLLCGTLKFDGLLVLQARSSGAVPLLMVECSSDRQVRGLARYSAESIGADAGMQELMPEGVLTLTVDPVKGQRYQGIVALEGVNLAECLSNYFASSEQLPTRFWLNANGRRARGLLLQQLPADRLKDPEAREASWQHLTTLADTLTAEELLALDNETVLHRLYHEETVRLFEPQPLVFHCSCSRERSANALVSLGQADCERLLEEEEGSISIDCQFCNQRYLFDASDVAQLFAGAGSQGPSETRH</sequence>
<accession>B7V3U0</accession>
<organism>
    <name type="scientific">Pseudomonas aeruginosa (strain LESB58)</name>
    <dbReference type="NCBI Taxonomy" id="557722"/>
    <lineage>
        <taxon>Bacteria</taxon>
        <taxon>Pseudomonadati</taxon>
        <taxon>Pseudomonadota</taxon>
        <taxon>Gammaproteobacteria</taxon>
        <taxon>Pseudomonadales</taxon>
        <taxon>Pseudomonadaceae</taxon>
        <taxon>Pseudomonas</taxon>
    </lineage>
</organism>
<dbReference type="EMBL" id="FM209186">
    <property type="protein sequence ID" value="CAW30341.1"/>
    <property type="molecule type" value="Genomic_DNA"/>
</dbReference>
<dbReference type="RefSeq" id="WP_003096245.1">
    <property type="nucleotide sequence ID" value="NC_011770.1"/>
</dbReference>
<dbReference type="SMR" id="B7V3U0"/>
<dbReference type="KEGG" id="pag:PLES_55871"/>
<dbReference type="HOGENOM" id="CLU_054493_0_0_6"/>
<dbReference type="GO" id="GO:0005737">
    <property type="term" value="C:cytoplasm"/>
    <property type="evidence" value="ECO:0007669"/>
    <property type="project" value="UniProtKB-SubCell"/>
</dbReference>
<dbReference type="GO" id="GO:0044183">
    <property type="term" value="F:protein folding chaperone"/>
    <property type="evidence" value="ECO:0007669"/>
    <property type="project" value="TreeGrafter"/>
</dbReference>
<dbReference type="GO" id="GO:0051082">
    <property type="term" value="F:unfolded protein binding"/>
    <property type="evidence" value="ECO:0007669"/>
    <property type="project" value="UniProtKB-UniRule"/>
</dbReference>
<dbReference type="GO" id="GO:0042026">
    <property type="term" value="P:protein refolding"/>
    <property type="evidence" value="ECO:0007669"/>
    <property type="project" value="TreeGrafter"/>
</dbReference>
<dbReference type="CDD" id="cd00498">
    <property type="entry name" value="Hsp33"/>
    <property type="match status" value="1"/>
</dbReference>
<dbReference type="Gene3D" id="1.10.287.480">
    <property type="entry name" value="helix hairpin bin"/>
    <property type="match status" value="1"/>
</dbReference>
<dbReference type="Gene3D" id="3.55.30.10">
    <property type="entry name" value="Hsp33 domain"/>
    <property type="match status" value="1"/>
</dbReference>
<dbReference type="Gene3D" id="3.90.1280.10">
    <property type="entry name" value="HSP33 redox switch-like"/>
    <property type="match status" value="1"/>
</dbReference>
<dbReference type="HAMAP" id="MF_00117">
    <property type="entry name" value="HslO"/>
    <property type="match status" value="1"/>
</dbReference>
<dbReference type="InterPro" id="IPR000397">
    <property type="entry name" value="Heat_shock_Hsp33"/>
</dbReference>
<dbReference type="InterPro" id="IPR016154">
    <property type="entry name" value="Heat_shock_Hsp33_C"/>
</dbReference>
<dbReference type="InterPro" id="IPR016153">
    <property type="entry name" value="Heat_shock_Hsp33_N"/>
</dbReference>
<dbReference type="InterPro" id="IPR023212">
    <property type="entry name" value="Hsp33_helix_hairpin_bin_dom_sf"/>
</dbReference>
<dbReference type="NCBIfam" id="NF001033">
    <property type="entry name" value="PRK00114.1"/>
    <property type="match status" value="1"/>
</dbReference>
<dbReference type="PANTHER" id="PTHR30111">
    <property type="entry name" value="33 KDA CHAPERONIN"/>
    <property type="match status" value="1"/>
</dbReference>
<dbReference type="PANTHER" id="PTHR30111:SF1">
    <property type="entry name" value="33 KDA CHAPERONIN"/>
    <property type="match status" value="1"/>
</dbReference>
<dbReference type="Pfam" id="PF01430">
    <property type="entry name" value="HSP33"/>
    <property type="match status" value="1"/>
</dbReference>
<dbReference type="PIRSF" id="PIRSF005261">
    <property type="entry name" value="Heat_shock_Hsp33"/>
    <property type="match status" value="1"/>
</dbReference>
<dbReference type="SUPFAM" id="SSF64397">
    <property type="entry name" value="Hsp33 domain"/>
    <property type="match status" value="1"/>
</dbReference>
<dbReference type="SUPFAM" id="SSF118352">
    <property type="entry name" value="HSP33 redox switch-like"/>
    <property type="match status" value="1"/>
</dbReference>
<evidence type="ECO:0000255" key="1">
    <source>
        <dbReference type="HAMAP-Rule" id="MF_00117"/>
    </source>
</evidence>
<protein>
    <recommendedName>
        <fullName evidence="1">33 kDa chaperonin</fullName>
    </recommendedName>
    <alternativeName>
        <fullName evidence="1">Heat shock protein 33 homolog</fullName>
        <shortName evidence="1">HSP33</shortName>
    </alternativeName>
</protein>
<keyword id="KW-0143">Chaperone</keyword>
<keyword id="KW-0963">Cytoplasm</keyword>
<keyword id="KW-1015">Disulfide bond</keyword>
<keyword id="KW-0676">Redox-active center</keyword>
<keyword id="KW-0346">Stress response</keyword>
<keyword id="KW-0862">Zinc</keyword>
<feature type="chain" id="PRO_1000190464" description="33 kDa chaperonin">
    <location>
        <begin position="1"/>
        <end position="297"/>
    </location>
</feature>
<feature type="disulfide bond" description="Redox-active" evidence="1">
    <location>
        <begin position="232"/>
        <end position="234"/>
    </location>
</feature>
<feature type="disulfide bond" description="Redox-active" evidence="1">
    <location>
        <begin position="266"/>
        <end position="269"/>
    </location>
</feature>
<comment type="function">
    <text evidence="1">Redox regulated molecular chaperone. Protects both thermally unfolding and oxidatively damaged proteins from irreversible aggregation. Plays an important role in the bacterial defense system toward oxidative stress.</text>
</comment>
<comment type="subcellular location">
    <subcellularLocation>
        <location evidence="1">Cytoplasm</location>
    </subcellularLocation>
</comment>
<comment type="PTM">
    <text evidence="1">Under oxidizing conditions two disulfide bonds are formed involving the reactive cysteines. Under reducing conditions zinc is bound to the reactive cysteines and the protein is inactive.</text>
</comment>
<comment type="similarity">
    <text evidence="1">Belongs to the HSP33 family.</text>
</comment>
<name>HSLO_PSEA8</name>